<gene>
    <name evidence="1" type="primary">rpsM</name>
    <name type="ordered locus">LIC_12849</name>
</gene>
<comment type="function">
    <text evidence="1">Located at the top of the head of the 30S subunit, it contacts several helices of the 16S rRNA. In the 70S ribosome it contacts the 23S rRNA (bridge B1a) and protein L5 of the 50S subunit (bridge B1b), connecting the 2 subunits; these bridges are implicated in subunit movement. Contacts the tRNAs in the A and P-sites.</text>
</comment>
<comment type="subunit">
    <text evidence="1">Part of the 30S ribosomal subunit. Forms a loose heterodimer with protein S19. Forms two bridges to the 50S subunit in the 70S ribosome.</text>
</comment>
<comment type="similarity">
    <text evidence="1">Belongs to the universal ribosomal protein uS13 family.</text>
</comment>
<evidence type="ECO:0000255" key="1">
    <source>
        <dbReference type="HAMAP-Rule" id="MF_01315"/>
    </source>
</evidence>
<evidence type="ECO:0000256" key="2">
    <source>
        <dbReference type="SAM" id="MobiDB-lite"/>
    </source>
</evidence>
<evidence type="ECO:0000305" key="3"/>
<proteinExistence type="inferred from homology"/>
<reference key="1">
    <citation type="journal article" date="2004" name="J. Bacteriol.">
        <title>Comparative genomics of two Leptospira interrogans serovars reveals novel insights into physiology and pathogenesis.</title>
        <authorList>
            <person name="Nascimento A.L.T.O."/>
            <person name="Ko A.I."/>
            <person name="Martins E.A.L."/>
            <person name="Monteiro-Vitorello C.B."/>
            <person name="Ho P.L."/>
            <person name="Haake D.A."/>
            <person name="Verjovski-Almeida S."/>
            <person name="Hartskeerl R.A."/>
            <person name="Marques M.V."/>
            <person name="Oliveira M.C."/>
            <person name="Menck C.F.M."/>
            <person name="Leite L.C.C."/>
            <person name="Carrer H."/>
            <person name="Coutinho L.L."/>
            <person name="Degrave W.M."/>
            <person name="Dellagostin O.A."/>
            <person name="El-Dorry H."/>
            <person name="Ferro E.S."/>
            <person name="Ferro M.I.T."/>
            <person name="Furlan L.R."/>
            <person name="Gamberini M."/>
            <person name="Giglioti E.A."/>
            <person name="Goes-Neto A."/>
            <person name="Goldman G.H."/>
            <person name="Goldman M.H.S."/>
            <person name="Harakava R."/>
            <person name="Jeronimo S.M.B."/>
            <person name="Junqueira-de-Azevedo I.L.M."/>
            <person name="Kimura E.T."/>
            <person name="Kuramae E.E."/>
            <person name="Lemos E.G.M."/>
            <person name="Lemos M.V.F."/>
            <person name="Marino C.L."/>
            <person name="Nunes L.R."/>
            <person name="de Oliveira R.C."/>
            <person name="Pereira G.G."/>
            <person name="Reis M.S."/>
            <person name="Schriefer A."/>
            <person name="Siqueira W.J."/>
            <person name="Sommer P."/>
            <person name="Tsai S.M."/>
            <person name="Simpson A.J.G."/>
            <person name="Ferro J.A."/>
            <person name="Camargo L.E.A."/>
            <person name="Kitajima J.P."/>
            <person name="Setubal J.C."/>
            <person name="Van Sluys M.A."/>
        </authorList>
    </citation>
    <scope>NUCLEOTIDE SEQUENCE [LARGE SCALE GENOMIC DNA]</scope>
    <source>
        <strain>Fiocruz L1-130</strain>
    </source>
</reference>
<organism>
    <name type="scientific">Leptospira interrogans serogroup Icterohaemorrhagiae serovar copenhageni (strain Fiocruz L1-130)</name>
    <dbReference type="NCBI Taxonomy" id="267671"/>
    <lineage>
        <taxon>Bacteria</taxon>
        <taxon>Pseudomonadati</taxon>
        <taxon>Spirochaetota</taxon>
        <taxon>Spirochaetia</taxon>
        <taxon>Leptospirales</taxon>
        <taxon>Leptospiraceae</taxon>
        <taxon>Leptospira</taxon>
    </lineage>
</organism>
<accession>Q72NI5</accession>
<name>RS13_LEPIC</name>
<keyword id="KW-0687">Ribonucleoprotein</keyword>
<keyword id="KW-0689">Ribosomal protein</keyword>
<keyword id="KW-0694">RNA-binding</keyword>
<keyword id="KW-0699">rRNA-binding</keyword>
<keyword id="KW-0820">tRNA-binding</keyword>
<protein>
    <recommendedName>
        <fullName evidence="1">Small ribosomal subunit protein uS13</fullName>
    </recommendedName>
    <alternativeName>
        <fullName evidence="3">30S ribosomal protein S13</fullName>
    </alternativeName>
</protein>
<feature type="chain" id="PRO_0000132101" description="Small ribosomal subunit protein uS13">
    <location>
        <begin position="1"/>
        <end position="125"/>
    </location>
</feature>
<feature type="region of interest" description="Disordered" evidence="2">
    <location>
        <begin position="95"/>
        <end position="125"/>
    </location>
</feature>
<feature type="compositionally biased region" description="Basic residues" evidence="2">
    <location>
        <begin position="105"/>
        <end position="125"/>
    </location>
</feature>
<sequence length="125" mass="14038">MARIAGIDLPREKRIVVGLTYIFGIGNSLSKLILKKAGIDESIRVKDLNESQEAAIRKTLEETAKVEGDLRSEIQLNIKRLMDIGCYRGLRHRRGLPVNGQRTRTNARTRKGGKKTVANKKKVTK</sequence>
<dbReference type="EMBL" id="AE016823">
    <property type="protein sequence ID" value="AAS71402.1"/>
    <property type="molecule type" value="Genomic_DNA"/>
</dbReference>
<dbReference type="RefSeq" id="WP_000090769.1">
    <property type="nucleotide sequence ID" value="NC_005823.1"/>
</dbReference>
<dbReference type="SMR" id="Q72NI5"/>
<dbReference type="GeneID" id="61142723"/>
<dbReference type="KEGG" id="lic:LIC_12849"/>
<dbReference type="HOGENOM" id="CLU_103849_1_2_12"/>
<dbReference type="Proteomes" id="UP000007037">
    <property type="component" value="Chromosome I"/>
</dbReference>
<dbReference type="GO" id="GO:0005829">
    <property type="term" value="C:cytosol"/>
    <property type="evidence" value="ECO:0007669"/>
    <property type="project" value="TreeGrafter"/>
</dbReference>
<dbReference type="GO" id="GO:0015935">
    <property type="term" value="C:small ribosomal subunit"/>
    <property type="evidence" value="ECO:0007669"/>
    <property type="project" value="TreeGrafter"/>
</dbReference>
<dbReference type="GO" id="GO:0019843">
    <property type="term" value="F:rRNA binding"/>
    <property type="evidence" value="ECO:0007669"/>
    <property type="project" value="UniProtKB-UniRule"/>
</dbReference>
<dbReference type="GO" id="GO:0003735">
    <property type="term" value="F:structural constituent of ribosome"/>
    <property type="evidence" value="ECO:0007669"/>
    <property type="project" value="InterPro"/>
</dbReference>
<dbReference type="GO" id="GO:0000049">
    <property type="term" value="F:tRNA binding"/>
    <property type="evidence" value="ECO:0007669"/>
    <property type="project" value="UniProtKB-UniRule"/>
</dbReference>
<dbReference type="GO" id="GO:0006412">
    <property type="term" value="P:translation"/>
    <property type="evidence" value="ECO:0007669"/>
    <property type="project" value="UniProtKB-UniRule"/>
</dbReference>
<dbReference type="FunFam" id="1.10.8.50:FF:000001">
    <property type="entry name" value="30S ribosomal protein S13"/>
    <property type="match status" value="1"/>
</dbReference>
<dbReference type="FunFam" id="4.10.910.10:FF:000001">
    <property type="entry name" value="30S ribosomal protein S13"/>
    <property type="match status" value="1"/>
</dbReference>
<dbReference type="Gene3D" id="1.10.8.50">
    <property type="match status" value="1"/>
</dbReference>
<dbReference type="Gene3D" id="4.10.910.10">
    <property type="entry name" value="30s ribosomal protein s13, domain 2"/>
    <property type="match status" value="1"/>
</dbReference>
<dbReference type="HAMAP" id="MF_01315">
    <property type="entry name" value="Ribosomal_uS13"/>
    <property type="match status" value="1"/>
</dbReference>
<dbReference type="InterPro" id="IPR027437">
    <property type="entry name" value="Rbsml_uS13_C"/>
</dbReference>
<dbReference type="InterPro" id="IPR001892">
    <property type="entry name" value="Ribosomal_uS13"/>
</dbReference>
<dbReference type="InterPro" id="IPR010979">
    <property type="entry name" value="Ribosomal_uS13-like_H2TH"/>
</dbReference>
<dbReference type="InterPro" id="IPR019980">
    <property type="entry name" value="Ribosomal_uS13_bac-type"/>
</dbReference>
<dbReference type="InterPro" id="IPR018269">
    <property type="entry name" value="Ribosomal_uS13_CS"/>
</dbReference>
<dbReference type="NCBIfam" id="TIGR03631">
    <property type="entry name" value="uS13_bact"/>
    <property type="match status" value="1"/>
</dbReference>
<dbReference type="PANTHER" id="PTHR10871">
    <property type="entry name" value="30S RIBOSOMAL PROTEIN S13/40S RIBOSOMAL PROTEIN S18"/>
    <property type="match status" value="1"/>
</dbReference>
<dbReference type="PANTHER" id="PTHR10871:SF1">
    <property type="entry name" value="SMALL RIBOSOMAL SUBUNIT PROTEIN US13M"/>
    <property type="match status" value="1"/>
</dbReference>
<dbReference type="Pfam" id="PF00416">
    <property type="entry name" value="Ribosomal_S13"/>
    <property type="match status" value="1"/>
</dbReference>
<dbReference type="PIRSF" id="PIRSF002134">
    <property type="entry name" value="Ribosomal_S13"/>
    <property type="match status" value="1"/>
</dbReference>
<dbReference type="SUPFAM" id="SSF46946">
    <property type="entry name" value="S13-like H2TH domain"/>
    <property type="match status" value="1"/>
</dbReference>
<dbReference type="PROSITE" id="PS00646">
    <property type="entry name" value="RIBOSOMAL_S13_1"/>
    <property type="match status" value="1"/>
</dbReference>
<dbReference type="PROSITE" id="PS50159">
    <property type="entry name" value="RIBOSOMAL_S13_2"/>
    <property type="match status" value="1"/>
</dbReference>